<sequence>MELNQLKSVPKARNHKTKTLGRGHGSGLGKTSGRGQKGQKARKSGLTRPGFEGGQTPLYRRLPKFGNARKGFLKQEWVVLNLNKIAKLKLDKINRASLIEKQVISAKSQLPIKLIGHTKLEKPLHFEVHKVSKQALKAVENANGSVKLLEK</sequence>
<proteinExistence type="evidence at protein level"/>
<comment type="function">
    <text evidence="1">Binds to the 23S rRNA.</text>
</comment>
<comment type="subunit">
    <text evidence="1">Part of the 50S ribosomal subunit.</text>
</comment>
<comment type="similarity">
    <text evidence="1">Belongs to the universal ribosomal protein uL15 family.</text>
</comment>
<accession>Q50300</accession>
<dbReference type="EMBL" id="U34795">
    <property type="protein sequence ID" value="AAC43698.1"/>
    <property type="molecule type" value="Genomic_DNA"/>
</dbReference>
<dbReference type="EMBL" id="U00089">
    <property type="protein sequence ID" value="AAB96296.1"/>
    <property type="molecule type" value="Genomic_DNA"/>
</dbReference>
<dbReference type="PIR" id="S62825">
    <property type="entry name" value="S62825"/>
</dbReference>
<dbReference type="RefSeq" id="NP_109871.1">
    <property type="nucleotide sequence ID" value="NC_000912.1"/>
</dbReference>
<dbReference type="RefSeq" id="WP_010874540.1">
    <property type="nucleotide sequence ID" value="NZ_OU342337.1"/>
</dbReference>
<dbReference type="PDB" id="7OOD">
    <property type="method" value="EM"/>
    <property type="resolution" value="3.40 A"/>
    <property type="chains" value="k=1-151"/>
</dbReference>
<dbReference type="PDB" id="7P6Z">
    <property type="method" value="EM"/>
    <property type="resolution" value="3.50 A"/>
    <property type="chains" value="k=1-151"/>
</dbReference>
<dbReference type="PDB" id="7PAH">
    <property type="method" value="EM"/>
    <property type="resolution" value="9.50 A"/>
    <property type="chains" value="k=1-151"/>
</dbReference>
<dbReference type="PDB" id="7PAI">
    <property type="method" value="EM"/>
    <property type="resolution" value="6.70 A"/>
    <property type="chains" value="k=1-151"/>
</dbReference>
<dbReference type="PDB" id="7PAJ">
    <property type="method" value="EM"/>
    <property type="resolution" value="7.30 A"/>
    <property type="chains" value="k=1-151"/>
</dbReference>
<dbReference type="PDB" id="7PAK">
    <property type="method" value="EM"/>
    <property type="resolution" value="5.30 A"/>
    <property type="chains" value="k=1-151"/>
</dbReference>
<dbReference type="PDB" id="7PAL">
    <property type="method" value="EM"/>
    <property type="resolution" value="4.70 A"/>
    <property type="chains" value="k=1-151"/>
</dbReference>
<dbReference type="PDB" id="7PAM">
    <property type="method" value="EM"/>
    <property type="resolution" value="6.80 A"/>
    <property type="chains" value="k=1-151"/>
</dbReference>
<dbReference type="PDB" id="7PAN">
    <property type="method" value="EM"/>
    <property type="resolution" value="9.70 A"/>
    <property type="chains" value="k=1-151"/>
</dbReference>
<dbReference type="PDB" id="7PAO">
    <property type="method" value="EM"/>
    <property type="resolution" value="7.00 A"/>
    <property type="chains" value="k=1-151"/>
</dbReference>
<dbReference type="PDB" id="7PAQ">
    <property type="method" value="EM"/>
    <property type="resolution" value="8.90 A"/>
    <property type="chains" value="k=1-151"/>
</dbReference>
<dbReference type="PDB" id="7PAR">
    <property type="method" value="EM"/>
    <property type="resolution" value="8.20 A"/>
    <property type="chains" value="k=1-151"/>
</dbReference>
<dbReference type="PDB" id="7PAS">
    <property type="method" value="EM"/>
    <property type="resolution" value="16.00 A"/>
    <property type="chains" value="k=1-151"/>
</dbReference>
<dbReference type="PDB" id="7PAT">
    <property type="method" value="EM"/>
    <property type="resolution" value="9.20 A"/>
    <property type="chains" value="k=1-151"/>
</dbReference>
<dbReference type="PDB" id="7PAU">
    <property type="method" value="EM"/>
    <property type="resolution" value="8.30 A"/>
    <property type="chains" value="k=1-151"/>
</dbReference>
<dbReference type="PDB" id="7PH9">
    <property type="method" value="EM"/>
    <property type="resolution" value="8.70 A"/>
    <property type="chains" value="k=1-151"/>
</dbReference>
<dbReference type="PDB" id="7PHA">
    <property type="method" value="EM"/>
    <property type="resolution" value="8.50 A"/>
    <property type="chains" value="k=1-151"/>
</dbReference>
<dbReference type="PDB" id="7PHB">
    <property type="method" value="EM"/>
    <property type="resolution" value="4.90 A"/>
    <property type="chains" value="k=1-151"/>
</dbReference>
<dbReference type="PDB" id="7PHC">
    <property type="method" value="EM"/>
    <property type="resolution" value="9.90 A"/>
    <property type="chains" value="k=1-151"/>
</dbReference>
<dbReference type="PDB" id="7PI8">
    <property type="method" value="EM"/>
    <property type="resolution" value="8.90 A"/>
    <property type="chains" value="k=1-151"/>
</dbReference>
<dbReference type="PDB" id="7PI9">
    <property type="method" value="EM"/>
    <property type="resolution" value="6.30 A"/>
    <property type="chains" value="k=1-151"/>
</dbReference>
<dbReference type="PDB" id="7PIA">
    <property type="method" value="EM"/>
    <property type="resolution" value="13.60 A"/>
    <property type="chains" value="k=1-151"/>
</dbReference>
<dbReference type="PDB" id="7PIB">
    <property type="method" value="EM"/>
    <property type="resolution" value="4.70 A"/>
    <property type="chains" value="k=1-151"/>
</dbReference>
<dbReference type="PDB" id="7PIC">
    <property type="method" value="EM"/>
    <property type="resolution" value="9.10 A"/>
    <property type="chains" value="k=1-151"/>
</dbReference>
<dbReference type="PDB" id="7PIO">
    <property type="method" value="EM"/>
    <property type="resolution" value="9.50 A"/>
    <property type="chains" value="k=1-151"/>
</dbReference>
<dbReference type="PDB" id="7PIP">
    <property type="method" value="EM"/>
    <property type="resolution" value="9.30 A"/>
    <property type="chains" value="k=1-151"/>
</dbReference>
<dbReference type="PDB" id="7PIQ">
    <property type="method" value="EM"/>
    <property type="resolution" value="9.70 A"/>
    <property type="chains" value="k=1-151"/>
</dbReference>
<dbReference type="PDB" id="7PIR">
    <property type="method" value="EM"/>
    <property type="resolution" value="12.10 A"/>
    <property type="chains" value="k=1-151"/>
</dbReference>
<dbReference type="PDB" id="7PIS">
    <property type="method" value="EM"/>
    <property type="resolution" value="15.00 A"/>
    <property type="chains" value="k=1-151"/>
</dbReference>
<dbReference type="PDB" id="7PIT">
    <property type="method" value="EM"/>
    <property type="resolution" value="5.70 A"/>
    <property type="chains" value="k=1-151"/>
</dbReference>
<dbReference type="PDB" id="8P7X">
    <property type="method" value="EM"/>
    <property type="resolution" value="3.03 A"/>
    <property type="chains" value="k=1-151"/>
</dbReference>
<dbReference type="PDB" id="8P7Y">
    <property type="method" value="EM"/>
    <property type="resolution" value="3.70 A"/>
    <property type="chains" value="k=1-151"/>
</dbReference>
<dbReference type="PDB" id="8P8B">
    <property type="method" value="EM"/>
    <property type="resolution" value="2.90 A"/>
    <property type="chains" value="k=1-151"/>
</dbReference>
<dbReference type="PDB" id="8P8V">
    <property type="method" value="EM"/>
    <property type="resolution" value="8.70 A"/>
    <property type="chains" value="k=1-151"/>
</dbReference>
<dbReference type="PDB" id="8P8W">
    <property type="method" value="EM"/>
    <property type="resolution" value="8.70 A"/>
    <property type="chains" value="k=1-151"/>
</dbReference>
<dbReference type="PDBsum" id="7OOD"/>
<dbReference type="PDBsum" id="7P6Z"/>
<dbReference type="PDBsum" id="7PAH"/>
<dbReference type="PDBsum" id="7PAI"/>
<dbReference type="PDBsum" id="7PAJ"/>
<dbReference type="PDBsum" id="7PAK"/>
<dbReference type="PDBsum" id="7PAL"/>
<dbReference type="PDBsum" id="7PAM"/>
<dbReference type="PDBsum" id="7PAN"/>
<dbReference type="PDBsum" id="7PAO"/>
<dbReference type="PDBsum" id="7PAQ"/>
<dbReference type="PDBsum" id="7PAR"/>
<dbReference type="PDBsum" id="7PAS"/>
<dbReference type="PDBsum" id="7PAT"/>
<dbReference type="PDBsum" id="7PAU"/>
<dbReference type="PDBsum" id="7PH9"/>
<dbReference type="PDBsum" id="7PHA"/>
<dbReference type="PDBsum" id="7PHB"/>
<dbReference type="PDBsum" id="7PHC"/>
<dbReference type="PDBsum" id="7PI8"/>
<dbReference type="PDBsum" id="7PI9"/>
<dbReference type="PDBsum" id="7PIA"/>
<dbReference type="PDBsum" id="7PIB"/>
<dbReference type="PDBsum" id="7PIC"/>
<dbReference type="PDBsum" id="7PIO"/>
<dbReference type="PDBsum" id="7PIP"/>
<dbReference type="PDBsum" id="7PIQ"/>
<dbReference type="PDBsum" id="7PIR"/>
<dbReference type="PDBsum" id="7PIS"/>
<dbReference type="PDBsum" id="7PIT"/>
<dbReference type="PDBsum" id="8P7X"/>
<dbReference type="PDBsum" id="8P7Y"/>
<dbReference type="PDBsum" id="8P8B"/>
<dbReference type="PDBsum" id="8P8V"/>
<dbReference type="PDBsum" id="8P8W"/>
<dbReference type="EMDB" id="EMD-13234"/>
<dbReference type="EMDB" id="EMD-13272"/>
<dbReference type="EMDB" id="EMD-13273"/>
<dbReference type="EMDB" id="EMD-13274"/>
<dbReference type="EMDB" id="EMD-13275"/>
<dbReference type="EMDB" id="EMD-13276"/>
<dbReference type="EMDB" id="EMD-13277"/>
<dbReference type="EMDB" id="EMD-13278"/>
<dbReference type="EMDB" id="EMD-13279"/>
<dbReference type="EMDB" id="EMD-13280"/>
<dbReference type="EMDB" id="EMD-13281"/>
<dbReference type="EMDB" id="EMD-13282"/>
<dbReference type="EMDB" id="EMD-13285"/>
<dbReference type="EMDB" id="EMD-13286"/>
<dbReference type="EMDB" id="EMD-13410"/>
<dbReference type="EMDB" id="EMD-13411"/>
<dbReference type="EMDB" id="EMD-13412"/>
<dbReference type="EMDB" id="EMD-13413"/>
<dbReference type="EMDB" id="EMD-13432"/>
<dbReference type="EMDB" id="EMD-13433"/>
<dbReference type="EMDB" id="EMD-13434"/>
<dbReference type="EMDB" id="EMD-13435"/>
<dbReference type="EMDB" id="EMD-13436"/>
<dbReference type="EMDB" id="EMD-13445"/>
<dbReference type="EMDB" id="EMD-13446"/>
<dbReference type="EMDB" id="EMD-13447"/>
<dbReference type="EMDB" id="EMD-13448"/>
<dbReference type="EMDB" id="EMD-13449"/>
<dbReference type="EMDB" id="EMD-13450"/>
<dbReference type="SMR" id="Q50300"/>
<dbReference type="STRING" id="272634.MPN_183"/>
<dbReference type="EnsemblBacteria" id="AAB96296">
    <property type="protein sequence ID" value="AAB96296"/>
    <property type="gene ID" value="MPN_183"/>
</dbReference>
<dbReference type="KEGG" id="mpn:MPN_183"/>
<dbReference type="PATRIC" id="fig|272634.6.peg.201"/>
<dbReference type="HOGENOM" id="CLU_055188_4_2_14"/>
<dbReference type="OrthoDB" id="9810293at2"/>
<dbReference type="BioCyc" id="MPNE272634:G1GJ3-296-MONOMER"/>
<dbReference type="Proteomes" id="UP000000808">
    <property type="component" value="Chromosome"/>
</dbReference>
<dbReference type="GO" id="GO:0022625">
    <property type="term" value="C:cytosolic large ribosomal subunit"/>
    <property type="evidence" value="ECO:0007669"/>
    <property type="project" value="TreeGrafter"/>
</dbReference>
<dbReference type="GO" id="GO:0019843">
    <property type="term" value="F:rRNA binding"/>
    <property type="evidence" value="ECO:0007669"/>
    <property type="project" value="UniProtKB-UniRule"/>
</dbReference>
<dbReference type="GO" id="GO:0003735">
    <property type="term" value="F:structural constituent of ribosome"/>
    <property type="evidence" value="ECO:0007669"/>
    <property type="project" value="InterPro"/>
</dbReference>
<dbReference type="GO" id="GO:0006412">
    <property type="term" value="P:translation"/>
    <property type="evidence" value="ECO:0007669"/>
    <property type="project" value="UniProtKB-UniRule"/>
</dbReference>
<dbReference type="Gene3D" id="3.100.10.10">
    <property type="match status" value="1"/>
</dbReference>
<dbReference type="HAMAP" id="MF_01341">
    <property type="entry name" value="Ribosomal_uL15"/>
    <property type="match status" value="1"/>
</dbReference>
<dbReference type="InterPro" id="IPR030878">
    <property type="entry name" value="Ribosomal_uL15"/>
</dbReference>
<dbReference type="InterPro" id="IPR021131">
    <property type="entry name" value="Ribosomal_uL15/eL18"/>
</dbReference>
<dbReference type="InterPro" id="IPR036227">
    <property type="entry name" value="Ribosomal_uL15/eL18_sf"/>
</dbReference>
<dbReference type="InterPro" id="IPR005749">
    <property type="entry name" value="Ribosomal_uL15_bac-type"/>
</dbReference>
<dbReference type="NCBIfam" id="TIGR01071">
    <property type="entry name" value="rplO_bact"/>
    <property type="match status" value="1"/>
</dbReference>
<dbReference type="PANTHER" id="PTHR12934">
    <property type="entry name" value="50S RIBOSOMAL PROTEIN L15"/>
    <property type="match status" value="1"/>
</dbReference>
<dbReference type="PANTHER" id="PTHR12934:SF11">
    <property type="entry name" value="LARGE RIBOSOMAL SUBUNIT PROTEIN UL15M"/>
    <property type="match status" value="1"/>
</dbReference>
<dbReference type="Pfam" id="PF00828">
    <property type="entry name" value="Ribosomal_L27A"/>
    <property type="match status" value="1"/>
</dbReference>
<dbReference type="SUPFAM" id="SSF52080">
    <property type="entry name" value="Ribosomal proteins L15p and L18e"/>
    <property type="match status" value="1"/>
</dbReference>
<name>RL15_MYCPN</name>
<feature type="chain" id="PRO_0000104765" description="Large ribosomal subunit protein uL15">
    <location>
        <begin position="1"/>
        <end position="151"/>
    </location>
</feature>
<feature type="region of interest" description="Disordered" evidence="2">
    <location>
        <begin position="1"/>
        <end position="58"/>
    </location>
</feature>
<feature type="compositionally biased region" description="Basic residues" evidence="2">
    <location>
        <begin position="10"/>
        <end position="21"/>
    </location>
</feature>
<feature type="compositionally biased region" description="Gly residues" evidence="2">
    <location>
        <begin position="22"/>
        <end position="36"/>
    </location>
</feature>
<feature type="helix" evidence="4">
    <location>
        <begin position="5"/>
        <end position="7"/>
    </location>
</feature>
<feature type="turn" evidence="5">
    <location>
        <begin position="10"/>
        <end position="12"/>
    </location>
</feature>
<feature type="strand" evidence="5">
    <location>
        <begin position="20"/>
        <end position="22"/>
    </location>
</feature>
<feature type="turn" evidence="5">
    <location>
        <begin position="24"/>
        <end position="27"/>
    </location>
</feature>
<feature type="turn" evidence="5">
    <location>
        <begin position="30"/>
        <end position="33"/>
    </location>
</feature>
<feature type="strand" evidence="5">
    <location>
        <begin position="36"/>
        <end position="38"/>
    </location>
</feature>
<feature type="helix" evidence="5">
    <location>
        <begin position="39"/>
        <end position="41"/>
    </location>
</feature>
<feature type="strand" evidence="5">
    <location>
        <begin position="42"/>
        <end position="44"/>
    </location>
</feature>
<feature type="helix" evidence="5">
    <location>
        <begin position="58"/>
        <end position="61"/>
    </location>
</feature>
<feature type="strand" evidence="5">
    <location>
        <begin position="78"/>
        <end position="81"/>
    </location>
</feature>
<feature type="helix" evidence="5">
    <location>
        <begin position="82"/>
        <end position="85"/>
    </location>
</feature>
<feature type="strand" evidence="4">
    <location>
        <begin position="91"/>
        <end position="94"/>
    </location>
</feature>
<feature type="helix" evidence="5">
    <location>
        <begin position="95"/>
        <end position="100"/>
    </location>
</feature>
<feature type="strand" evidence="4">
    <location>
        <begin position="102"/>
        <end position="104"/>
    </location>
</feature>
<feature type="strand" evidence="5">
    <location>
        <begin position="112"/>
        <end position="115"/>
    </location>
</feature>
<feature type="strand" evidence="5">
    <location>
        <begin position="125"/>
        <end position="131"/>
    </location>
</feature>
<feature type="helix" evidence="5">
    <location>
        <begin position="133"/>
        <end position="141"/>
    </location>
</feature>
<feature type="strand" evidence="5">
    <location>
        <begin position="145"/>
        <end position="148"/>
    </location>
</feature>
<organism>
    <name type="scientific">Mycoplasma pneumoniae (strain ATCC 29342 / M129 / Subtype 1)</name>
    <name type="common">Mycoplasmoides pneumoniae</name>
    <dbReference type="NCBI Taxonomy" id="272634"/>
    <lineage>
        <taxon>Bacteria</taxon>
        <taxon>Bacillati</taxon>
        <taxon>Mycoplasmatota</taxon>
        <taxon>Mycoplasmoidales</taxon>
        <taxon>Mycoplasmoidaceae</taxon>
        <taxon>Mycoplasmoides</taxon>
    </lineage>
</organism>
<gene>
    <name evidence="1" type="primary">rplO</name>
    <name type="ordered locus">MPN_183</name>
    <name type="ORF">MP648</name>
</gene>
<keyword id="KW-0002">3D-structure</keyword>
<keyword id="KW-1185">Reference proteome</keyword>
<keyword id="KW-0687">Ribonucleoprotein</keyword>
<keyword id="KW-0689">Ribosomal protein</keyword>
<keyword id="KW-0694">RNA-binding</keyword>
<keyword id="KW-0699">rRNA-binding</keyword>
<reference key="1">
    <citation type="journal article" date="1996" name="Nucleic Acids Res.">
        <title>Sequence analysis of 56 kb from the genome of the bacterium Mycoplasma pneumoniae comprising the dnaA region, the atp operon and a cluster of ribosomal protein genes.</title>
        <authorList>
            <person name="Hilbert H."/>
            <person name="Himmelreich R."/>
            <person name="Plagens H."/>
            <person name="Herrmann R."/>
        </authorList>
    </citation>
    <scope>NUCLEOTIDE SEQUENCE [GENOMIC DNA]</scope>
    <source>
        <strain>ATCC 29342 / M129 / Subtype 1</strain>
    </source>
</reference>
<reference key="2">
    <citation type="journal article" date="1996" name="Nucleic Acids Res.">
        <title>Complete sequence analysis of the genome of the bacterium Mycoplasma pneumoniae.</title>
        <authorList>
            <person name="Himmelreich R."/>
            <person name="Hilbert H."/>
            <person name="Plagens H."/>
            <person name="Pirkl E."/>
            <person name="Li B.-C."/>
            <person name="Herrmann R."/>
        </authorList>
    </citation>
    <scope>NUCLEOTIDE SEQUENCE [LARGE SCALE GENOMIC DNA]</scope>
    <source>
        <strain>ATCC 29342 / M129 / Subtype 1</strain>
    </source>
</reference>
<protein>
    <recommendedName>
        <fullName evidence="1">Large ribosomal subunit protein uL15</fullName>
    </recommendedName>
    <alternativeName>
        <fullName evidence="3">50S ribosomal protein L15</fullName>
    </alternativeName>
</protein>
<evidence type="ECO:0000255" key="1">
    <source>
        <dbReference type="HAMAP-Rule" id="MF_01341"/>
    </source>
</evidence>
<evidence type="ECO:0000256" key="2">
    <source>
        <dbReference type="SAM" id="MobiDB-lite"/>
    </source>
</evidence>
<evidence type="ECO:0000305" key="3"/>
<evidence type="ECO:0007829" key="4">
    <source>
        <dbReference type="PDB" id="7OOD"/>
    </source>
</evidence>
<evidence type="ECO:0007829" key="5">
    <source>
        <dbReference type="PDB" id="8P8B"/>
    </source>
</evidence>